<feature type="chain" id="PRO_0000284233" description="Endoribonuclease YbeY">
    <location>
        <begin position="1"/>
        <end position="143"/>
    </location>
</feature>
<feature type="binding site" evidence="1">
    <location>
        <position position="109"/>
    </location>
    <ligand>
        <name>Zn(2+)</name>
        <dbReference type="ChEBI" id="CHEBI:29105"/>
        <note>catalytic</note>
    </ligand>
</feature>
<feature type="binding site" evidence="1">
    <location>
        <position position="113"/>
    </location>
    <ligand>
        <name>Zn(2+)</name>
        <dbReference type="ChEBI" id="CHEBI:29105"/>
        <note>catalytic</note>
    </ligand>
</feature>
<feature type="binding site" evidence="1">
    <location>
        <position position="119"/>
    </location>
    <ligand>
        <name>Zn(2+)</name>
        <dbReference type="ChEBI" id="CHEBI:29105"/>
        <note>catalytic</note>
    </ligand>
</feature>
<reference key="1">
    <citation type="journal article" date="2006" name="Proc. Natl. Acad. Sci. U.S.A.">
        <title>Genome reduction in Leptospira borgpetersenii reflects limited transmission potential.</title>
        <authorList>
            <person name="Bulach D.M."/>
            <person name="Zuerner R.L."/>
            <person name="Wilson P."/>
            <person name="Seemann T."/>
            <person name="McGrath A."/>
            <person name="Cullen P.A."/>
            <person name="Davis J."/>
            <person name="Johnson M."/>
            <person name="Kuczek E."/>
            <person name="Alt D.P."/>
            <person name="Peterson-Burch B."/>
            <person name="Coppel R.L."/>
            <person name="Rood J.I."/>
            <person name="Davies J.K."/>
            <person name="Adler B."/>
        </authorList>
    </citation>
    <scope>NUCLEOTIDE SEQUENCE [LARGE SCALE GENOMIC DNA]</scope>
    <source>
        <strain>L550</strain>
    </source>
</reference>
<comment type="function">
    <text evidence="1">Single strand-specific metallo-endoribonuclease involved in late-stage 70S ribosome quality control and in maturation of the 3' terminus of the 16S rRNA.</text>
</comment>
<comment type="cofactor">
    <cofactor evidence="1">
        <name>Zn(2+)</name>
        <dbReference type="ChEBI" id="CHEBI:29105"/>
    </cofactor>
    <text evidence="1">Binds 1 zinc ion.</text>
</comment>
<comment type="subcellular location">
    <subcellularLocation>
        <location evidence="1">Cytoplasm</location>
    </subcellularLocation>
</comment>
<comment type="similarity">
    <text evidence="1">Belongs to the endoribonuclease YbeY family.</text>
</comment>
<gene>
    <name evidence="1" type="primary">ybeY</name>
    <name type="ordered locus">LBL_1253</name>
</gene>
<evidence type="ECO:0000255" key="1">
    <source>
        <dbReference type="HAMAP-Rule" id="MF_00009"/>
    </source>
</evidence>
<name>YBEY_LEPBL</name>
<proteinExistence type="inferred from homology"/>
<protein>
    <recommendedName>
        <fullName evidence="1">Endoribonuclease YbeY</fullName>
        <ecNumber evidence="1">3.1.-.-</ecNumber>
    </recommendedName>
</protein>
<keyword id="KW-0963">Cytoplasm</keyword>
<keyword id="KW-0255">Endonuclease</keyword>
<keyword id="KW-0378">Hydrolase</keyword>
<keyword id="KW-0479">Metal-binding</keyword>
<keyword id="KW-0540">Nuclease</keyword>
<keyword id="KW-0690">Ribosome biogenesis</keyword>
<keyword id="KW-0698">rRNA processing</keyword>
<keyword id="KW-0862">Zinc</keyword>
<organism>
    <name type="scientific">Leptospira borgpetersenii serovar Hardjo-bovis (strain L550)</name>
    <dbReference type="NCBI Taxonomy" id="355276"/>
    <lineage>
        <taxon>Bacteria</taxon>
        <taxon>Pseudomonadati</taxon>
        <taxon>Spirochaetota</taxon>
        <taxon>Spirochaetia</taxon>
        <taxon>Leptospirales</taxon>
        <taxon>Leptospiraceae</taxon>
        <taxon>Leptospira</taxon>
    </lineage>
</organism>
<sequence>MIFNCGILFRKELKDFPCELGLLLVGDSDMRKINRLRRGKDKTTDVLSFPLEFDSAPLQNVLQKRTGFDSNSLPPIALGEIVISVDTLEKQAVEIGHSVKDEFYRLLVHGFLHLLGYDHERGEEEERIMKLKEDECLEILQEL</sequence>
<dbReference type="EC" id="3.1.-.-" evidence="1"/>
<dbReference type="EMBL" id="CP000348">
    <property type="protein sequence ID" value="ABJ78751.1"/>
    <property type="molecule type" value="Genomic_DNA"/>
</dbReference>
<dbReference type="RefSeq" id="WP_011669985.1">
    <property type="nucleotide sequence ID" value="NC_008508.1"/>
</dbReference>
<dbReference type="SMR" id="Q052J4"/>
<dbReference type="KEGG" id="lbl:LBL_1253"/>
<dbReference type="HOGENOM" id="CLU_106710_3_3_12"/>
<dbReference type="GO" id="GO:0005737">
    <property type="term" value="C:cytoplasm"/>
    <property type="evidence" value="ECO:0007669"/>
    <property type="project" value="UniProtKB-SubCell"/>
</dbReference>
<dbReference type="GO" id="GO:0004222">
    <property type="term" value="F:metalloendopeptidase activity"/>
    <property type="evidence" value="ECO:0007669"/>
    <property type="project" value="InterPro"/>
</dbReference>
<dbReference type="GO" id="GO:0004521">
    <property type="term" value="F:RNA endonuclease activity"/>
    <property type="evidence" value="ECO:0007669"/>
    <property type="project" value="UniProtKB-UniRule"/>
</dbReference>
<dbReference type="GO" id="GO:0008270">
    <property type="term" value="F:zinc ion binding"/>
    <property type="evidence" value="ECO:0007669"/>
    <property type="project" value="UniProtKB-UniRule"/>
</dbReference>
<dbReference type="GO" id="GO:0006364">
    <property type="term" value="P:rRNA processing"/>
    <property type="evidence" value="ECO:0007669"/>
    <property type="project" value="UniProtKB-UniRule"/>
</dbReference>
<dbReference type="Gene3D" id="3.40.390.30">
    <property type="entry name" value="Metalloproteases ('zincins'), catalytic domain"/>
    <property type="match status" value="1"/>
</dbReference>
<dbReference type="HAMAP" id="MF_00009">
    <property type="entry name" value="Endoribonucl_YbeY"/>
    <property type="match status" value="1"/>
</dbReference>
<dbReference type="InterPro" id="IPR023091">
    <property type="entry name" value="MetalPrtase_cat_dom_sf_prd"/>
</dbReference>
<dbReference type="InterPro" id="IPR002036">
    <property type="entry name" value="YbeY"/>
</dbReference>
<dbReference type="InterPro" id="IPR020549">
    <property type="entry name" value="YbeY_CS"/>
</dbReference>
<dbReference type="NCBIfam" id="TIGR00043">
    <property type="entry name" value="rRNA maturation RNase YbeY"/>
    <property type="match status" value="1"/>
</dbReference>
<dbReference type="PANTHER" id="PTHR46986">
    <property type="entry name" value="ENDORIBONUCLEASE YBEY, CHLOROPLASTIC"/>
    <property type="match status" value="1"/>
</dbReference>
<dbReference type="PANTHER" id="PTHR46986:SF1">
    <property type="entry name" value="ENDORIBONUCLEASE YBEY, CHLOROPLASTIC"/>
    <property type="match status" value="1"/>
</dbReference>
<dbReference type="Pfam" id="PF02130">
    <property type="entry name" value="YbeY"/>
    <property type="match status" value="1"/>
</dbReference>
<dbReference type="SUPFAM" id="SSF55486">
    <property type="entry name" value="Metalloproteases ('zincins'), catalytic domain"/>
    <property type="match status" value="1"/>
</dbReference>
<dbReference type="PROSITE" id="PS01306">
    <property type="entry name" value="UPF0054"/>
    <property type="match status" value="1"/>
</dbReference>
<accession>Q052J4</accession>